<comment type="function">
    <text evidence="1">Accelerates the degradation of transcripts by removing pyrophosphate from the 5'-end of triphosphorylated RNA, leading to a more labile monophosphorylated state that can stimulate subsequent ribonuclease cleavage.</text>
</comment>
<comment type="cofactor">
    <cofactor evidence="1">
        <name>a divalent metal cation</name>
        <dbReference type="ChEBI" id="CHEBI:60240"/>
    </cofactor>
</comment>
<comment type="similarity">
    <text evidence="1">Belongs to the Nudix hydrolase family. RppH subfamily.</text>
</comment>
<protein>
    <recommendedName>
        <fullName evidence="1">RNA pyrophosphohydrolase</fullName>
        <ecNumber evidence="1">3.6.1.-</ecNumber>
    </recommendedName>
    <alternativeName>
        <fullName evidence="1">(Di)nucleoside polyphosphate hydrolase</fullName>
    </alternativeName>
</protein>
<feature type="chain" id="PRO_1000115273" description="RNA pyrophosphohydrolase">
    <location>
        <begin position="1"/>
        <end position="227"/>
    </location>
</feature>
<feature type="domain" description="Nudix hydrolase" evidence="1">
    <location>
        <begin position="6"/>
        <end position="149"/>
    </location>
</feature>
<feature type="region of interest" description="Disordered" evidence="2">
    <location>
        <begin position="165"/>
        <end position="227"/>
    </location>
</feature>
<feature type="short sequence motif" description="Nudix box">
    <location>
        <begin position="38"/>
        <end position="59"/>
    </location>
</feature>
<feature type="compositionally biased region" description="Low complexity" evidence="2">
    <location>
        <begin position="192"/>
        <end position="201"/>
    </location>
</feature>
<feature type="compositionally biased region" description="Polar residues" evidence="2">
    <location>
        <begin position="217"/>
        <end position="227"/>
    </location>
</feature>
<organism>
    <name type="scientific">Cupriavidus taiwanensis (strain DSM 17343 / BCRC 17206 / CCUG 44338 / CIP 107171 / LMG 19424 / R1)</name>
    <name type="common">Ralstonia taiwanensis (strain LMG 19424)</name>
    <dbReference type="NCBI Taxonomy" id="977880"/>
    <lineage>
        <taxon>Bacteria</taxon>
        <taxon>Pseudomonadati</taxon>
        <taxon>Pseudomonadota</taxon>
        <taxon>Betaproteobacteria</taxon>
        <taxon>Burkholderiales</taxon>
        <taxon>Burkholderiaceae</taxon>
        <taxon>Cupriavidus</taxon>
    </lineage>
</organism>
<name>RPPH_CUPTR</name>
<keyword id="KW-0378">Hydrolase</keyword>
<proteinExistence type="inferred from homology"/>
<evidence type="ECO:0000255" key="1">
    <source>
        <dbReference type="HAMAP-Rule" id="MF_00298"/>
    </source>
</evidence>
<evidence type="ECO:0000256" key="2">
    <source>
        <dbReference type="SAM" id="MobiDB-lite"/>
    </source>
</evidence>
<reference key="1">
    <citation type="journal article" date="2008" name="Genome Res.">
        <title>Genome sequence of the beta-rhizobium Cupriavidus taiwanensis and comparative genomics of rhizobia.</title>
        <authorList>
            <person name="Amadou C."/>
            <person name="Pascal G."/>
            <person name="Mangenot S."/>
            <person name="Glew M."/>
            <person name="Bontemps C."/>
            <person name="Capela D."/>
            <person name="Carrere S."/>
            <person name="Cruveiller S."/>
            <person name="Dossat C."/>
            <person name="Lajus A."/>
            <person name="Marchetti M."/>
            <person name="Poinsot V."/>
            <person name="Rouy Z."/>
            <person name="Servin B."/>
            <person name="Saad M."/>
            <person name="Schenowitz C."/>
            <person name="Barbe V."/>
            <person name="Batut J."/>
            <person name="Medigue C."/>
            <person name="Masson-Boivin C."/>
        </authorList>
    </citation>
    <scope>NUCLEOTIDE SEQUENCE [LARGE SCALE GENOMIC DNA]</scope>
    <source>
        <strain>DSM 17343 / BCRC 17206 / CCUG 44338 / CIP 107171 / LMG 19424 / R1</strain>
    </source>
</reference>
<gene>
    <name evidence="1" type="primary">rppH</name>
    <name evidence="1" type="synonym">nudH</name>
    <name type="ordered locus">RALTA_A2700</name>
</gene>
<sequence length="227" mass="26076">MLDREGFRPNVGIILLNARNEVFWGKRIGEHSWQFPQGGIKYGETPEQAMYRELHEEIGLLPEHVRIVGRTRDWLRYEVPDKFIRREIRGHYKGQKQIWFLLRMAGRDCDIHLRATEHPEFDAWRWSHYWVPLEAVIEFKRDVYQMALTELSRFLNRHPRVPLSPYGTHGAHGAHGVHGRHGGPRGQALSRAQAAQQADADGNAEVPGAADYVSPATPVSTTRSTDD</sequence>
<accession>B3R895</accession>
<dbReference type="EC" id="3.6.1.-" evidence="1"/>
<dbReference type="EMBL" id="CU633749">
    <property type="protein sequence ID" value="CAQ70631.1"/>
    <property type="molecule type" value="Genomic_DNA"/>
</dbReference>
<dbReference type="RefSeq" id="WP_012353927.1">
    <property type="nucleotide sequence ID" value="NC_010528.1"/>
</dbReference>
<dbReference type="SMR" id="B3R895"/>
<dbReference type="GeneID" id="29762614"/>
<dbReference type="KEGG" id="cti:RALTA_A2700"/>
<dbReference type="eggNOG" id="COG0494">
    <property type="taxonomic scope" value="Bacteria"/>
</dbReference>
<dbReference type="HOGENOM" id="CLU_087195_1_0_4"/>
<dbReference type="BioCyc" id="CTAI977880:RALTA_RS13135-MONOMER"/>
<dbReference type="Proteomes" id="UP000001692">
    <property type="component" value="Chromosome 1"/>
</dbReference>
<dbReference type="GO" id="GO:0016462">
    <property type="term" value="F:pyrophosphatase activity"/>
    <property type="evidence" value="ECO:0007669"/>
    <property type="project" value="UniProtKB-ARBA"/>
</dbReference>
<dbReference type="CDD" id="cd03671">
    <property type="entry name" value="NUDIX_Ap4A_hydrolase_plant_like"/>
    <property type="match status" value="1"/>
</dbReference>
<dbReference type="Gene3D" id="3.90.79.10">
    <property type="entry name" value="Nucleoside Triphosphate Pyrophosphohydrolase"/>
    <property type="match status" value="1"/>
</dbReference>
<dbReference type="HAMAP" id="MF_00298">
    <property type="entry name" value="Nudix_RppH"/>
    <property type="match status" value="1"/>
</dbReference>
<dbReference type="InterPro" id="IPR020476">
    <property type="entry name" value="Nudix_hydrolase"/>
</dbReference>
<dbReference type="InterPro" id="IPR015797">
    <property type="entry name" value="NUDIX_hydrolase-like_dom_sf"/>
</dbReference>
<dbReference type="InterPro" id="IPR020084">
    <property type="entry name" value="NUDIX_hydrolase_CS"/>
</dbReference>
<dbReference type="InterPro" id="IPR000086">
    <property type="entry name" value="NUDIX_hydrolase_dom"/>
</dbReference>
<dbReference type="InterPro" id="IPR022927">
    <property type="entry name" value="RppH"/>
</dbReference>
<dbReference type="NCBIfam" id="NF001935">
    <property type="entry name" value="PRK00714.1-2"/>
    <property type="match status" value="1"/>
</dbReference>
<dbReference type="NCBIfam" id="NF001937">
    <property type="entry name" value="PRK00714.1-4"/>
    <property type="match status" value="1"/>
</dbReference>
<dbReference type="NCBIfam" id="NF001938">
    <property type="entry name" value="PRK00714.1-5"/>
    <property type="match status" value="1"/>
</dbReference>
<dbReference type="PANTHER" id="PTHR43736">
    <property type="entry name" value="ADP-RIBOSE PYROPHOSPHATASE"/>
    <property type="match status" value="1"/>
</dbReference>
<dbReference type="PANTHER" id="PTHR43736:SF1">
    <property type="entry name" value="DIHYDRONEOPTERIN TRIPHOSPHATE DIPHOSPHATASE"/>
    <property type="match status" value="1"/>
</dbReference>
<dbReference type="Pfam" id="PF00293">
    <property type="entry name" value="NUDIX"/>
    <property type="match status" value="1"/>
</dbReference>
<dbReference type="PRINTS" id="PR00502">
    <property type="entry name" value="NUDIXFAMILY"/>
</dbReference>
<dbReference type="SUPFAM" id="SSF55811">
    <property type="entry name" value="Nudix"/>
    <property type="match status" value="1"/>
</dbReference>
<dbReference type="PROSITE" id="PS51462">
    <property type="entry name" value="NUDIX"/>
    <property type="match status" value="1"/>
</dbReference>
<dbReference type="PROSITE" id="PS00893">
    <property type="entry name" value="NUDIX_BOX"/>
    <property type="match status" value="1"/>
</dbReference>